<organism>
    <name type="scientific">Staphylococcus aureus (strain JH9)</name>
    <dbReference type="NCBI Taxonomy" id="359786"/>
    <lineage>
        <taxon>Bacteria</taxon>
        <taxon>Bacillati</taxon>
        <taxon>Bacillota</taxon>
        <taxon>Bacilli</taxon>
        <taxon>Bacillales</taxon>
        <taxon>Staphylococcaceae</taxon>
        <taxon>Staphylococcus</taxon>
    </lineage>
</organism>
<name>ARLY_STAA9</name>
<comment type="catalytic activity">
    <reaction evidence="1">
        <text>2-(N(omega)-L-arginino)succinate = fumarate + L-arginine</text>
        <dbReference type="Rhea" id="RHEA:24020"/>
        <dbReference type="ChEBI" id="CHEBI:29806"/>
        <dbReference type="ChEBI" id="CHEBI:32682"/>
        <dbReference type="ChEBI" id="CHEBI:57472"/>
        <dbReference type="EC" id="4.3.2.1"/>
    </reaction>
</comment>
<comment type="pathway">
    <text evidence="1">Amino-acid biosynthesis; L-arginine biosynthesis; L-arginine from L-ornithine and carbamoyl phosphate: step 3/3.</text>
</comment>
<comment type="subcellular location">
    <subcellularLocation>
        <location evidence="1">Cytoplasm</location>
    </subcellularLocation>
</comment>
<comment type="similarity">
    <text evidence="1">Belongs to the lyase 1 family. Argininosuccinate lyase subfamily.</text>
</comment>
<protein>
    <recommendedName>
        <fullName evidence="1">Argininosuccinate lyase</fullName>
        <shortName evidence="1">ASAL</shortName>
        <ecNumber evidence="1">4.3.2.1</ecNumber>
    </recommendedName>
    <alternativeName>
        <fullName evidence="1">Arginosuccinase</fullName>
    </alternativeName>
</protein>
<proteinExistence type="inferred from homology"/>
<dbReference type="EC" id="4.3.2.1" evidence="1"/>
<dbReference type="EMBL" id="CP000703">
    <property type="protein sequence ID" value="ABQ48761.1"/>
    <property type="molecule type" value="Genomic_DNA"/>
</dbReference>
<dbReference type="RefSeq" id="WP_000066053.1">
    <property type="nucleotide sequence ID" value="NC_009487.1"/>
</dbReference>
<dbReference type="SMR" id="A5IRD8"/>
<dbReference type="KEGG" id="saj:SaurJH9_0960"/>
<dbReference type="HOGENOM" id="CLU_027272_2_3_9"/>
<dbReference type="UniPathway" id="UPA00068">
    <property type="reaction ID" value="UER00114"/>
</dbReference>
<dbReference type="GO" id="GO:0005829">
    <property type="term" value="C:cytosol"/>
    <property type="evidence" value="ECO:0007669"/>
    <property type="project" value="TreeGrafter"/>
</dbReference>
<dbReference type="GO" id="GO:0004056">
    <property type="term" value="F:argininosuccinate lyase activity"/>
    <property type="evidence" value="ECO:0007669"/>
    <property type="project" value="UniProtKB-UniRule"/>
</dbReference>
<dbReference type="GO" id="GO:0042450">
    <property type="term" value="P:arginine biosynthetic process via ornithine"/>
    <property type="evidence" value="ECO:0007669"/>
    <property type="project" value="InterPro"/>
</dbReference>
<dbReference type="GO" id="GO:0006526">
    <property type="term" value="P:L-arginine biosynthetic process"/>
    <property type="evidence" value="ECO:0007669"/>
    <property type="project" value="UniProtKB-UniRule"/>
</dbReference>
<dbReference type="CDD" id="cd01359">
    <property type="entry name" value="Argininosuccinate_lyase"/>
    <property type="match status" value="1"/>
</dbReference>
<dbReference type="FunFam" id="1.10.275.10:FF:000002">
    <property type="entry name" value="Argininosuccinate lyase"/>
    <property type="match status" value="1"/>
</dbReference>
<dbReference type="FunFam" id="1.10.40.30:FF:000001">
    <property type="entry name" value="Argininosuccinate lyase"/>
    <property type="match status" value="1"/>
</dbReference>
<dbReference type="FunFam" id="1.20.200.10:FF:000006">
    <property type="entry name" value="Argininosuccinate lyase"/>
    <property type="match status" value="1"/>
</dbReference>
<dbReference type="Gene3D" id="1.10.40.30">
    <property type="entry name" value="Fumarase/aspartase (C-terminal domain)"/>
    <property type="match status" value="1"/>
</dbReference>
<dbReference type="Gene3D" id="1.20.200.10">
    <property type="entry name" value="Fumarase/aspartase (Central domain)"/>
    <property type="match status" value="1"/>
</dbReference>
<dbReference type="Gene3D" id="1.10.275.10">
    <property type="entry name" value="Fumarase/aspartase (N-terminal domain)"/>
    <property type="match status" value="1"/>
</dbReference>
<dbReference type="HAMAP" id="MF_00006">
    <property type="entry name" value="Arg_succ_lyase"/>
    <property type="match status" value="1"/>
</dbReference>
<dbReference type="InterPro" id="IPR029419">
    <property type="entry name" value="Arg_succ_lyase_C"/>
</dbReference>
<dbReference type="InterPro" id="IPR009049">
    <property type="entry name" value="Argininosuccinate_lyase"/>
</dbReference>
<dbReference type="InterPro" id="IPR024083">
    <property type="entry name" value="Fumarase/histidase_N"/>
</dbReference>
<dbReference type="InterPro" id="IPR020557">
    <property type="entry name" value="Fumarate_lyase_CS"/>
</dbReference>
<dbReference type="InterPro" id="IPR000362">
    <property type="entry name" value="Fumarate_lyase_fam"/>
</dbReference>
<dbReference type="InterPro" id="IPR022761">
    <property type="entry name" value="Fumarate_lyase_N"/>
</dbReference>
<dbReference type="InterPro" id="IPR008948">
    <property type="entry name" value="L-Aspartase-like"/>
</dbReference>
<dbReference type="NCBIfam" id="TIGR00838">
    <property type="entry name" value="argH"/>
    <property type="match status" value="1"/>
</dbReference>
<dbReference type="PANTHER" id="PTHR43814">
    <property type="entry name" value="ARGININOSUCCINATE LYASE"/>
    <property type="match status" value="1"/>
</dbReference>
<dbReference type="PANTHER" id="PTHR43814:SF1">
    <property type="entry name" value="ARGININOSUCCINATE LYASE"/>
    <property type="match status" value="1"/>
</dbReference>
<dbReference type="Pfam" id="PF14698">
    <property type="entry name" value="ASL_C2"/>
    <property type="match status" value="1"/>
</dbReference>
<dbReference type="Pfam" id="PF00206">
    <property type="entry name" value="Lyase_1"/>
    <property type="match status" value="1"/>
</dbReference>
<dbReference type="PRINTS" id="PR00145">
    <property type="entry name" value="ARGSUCLYASE"/>
</dbReference>
<dbReference type="PRINTS" id="PR00149">
    <property type="entry name" value="FUMRATELYASE"/>
</dbReference>
<dbReference type="SUPFAM" id="SSF48557">
    <property type="entry name" value="L-aspartase-like"/>
    <property type="match status" value="1"/>
</dbReference>
<dbReference type="PROSITE" id="PS00163">
    <property type="entry name" value="FUMARATE_LYASES"/>
    <property type="match status" value="1"/>
</dbReference>
<reference key="1">
    <citation type="submission" date="2007-05" db="EMBL/GenBank/DDBJ databases">
        <title>Complete sequence of chromosome of Staphylococcus aureus subsp. aureus JH9.</title>
        <authorList>
            <consortium name="US DOE Joint Genome Institute"/>
            <person name="Copeland A."/>
            <person name="Lucas S."/>
            <person name="Lapidus A."/>
            <person name="Barry K."/>
            <person name="Detter J.C."/>
            <person name="Glavina del Rio T."/>
            <person name="Hammon N."/>
            <person name="Israni S."/>
            <person name="Pitluck S."/>
            <person name="Chain P."/>
            <person name="Malfatti S."/>
            <person name="Shin M."/>
            <person name="Vergez L."/>
            <person name="Schmutz J."/>
            <person name="Larimer F."/>
            <person name="Land M."/>
            <person name="Hauser L."/>
            <person name="Kyrpides N."/>
            <person name="Kim E."/>
            <person name="Tomasz A."/>
            <person name="Richardson P."/>
        </authorList>
    </citation>
    <scope>NUCLEOTIDE SEQUENCE [LARGE SCALE GENOMIC DNA]</scope>
    <source>
        <strain>JH9</strain>
    </source>
</reference>
<feature type="chain" id="PRO_1000073862" description="Argininosuccinate lyase">
    <location>
        <begin position="1"/>
        <end position="459"/>
    </location>
</feature>
<sequence>MSNKAWGGRFEVQPEEWVDDFNASITFDQTLIDQDIEGSIAHATMLANQGIISQQDSEQIIQGLKSIQHDYHQDQIQFSASLEDIHLNIEHELIKRIGDAGGKLHTGRSRNDQVATDMHLYTKKQVQDIIALIKSLQSVIVDIASNNVDTIMPGYTHLQRAQPISFAHHIMTYFWMLQRDQQRFEDSLKRIDINPLGAAALSGTTYPIDRHETTALLNFGSLYENSLDAVSDRDYIIETLHNISLTMVHLSRFAEEIIFWSTDEAKFITLSDAFSTGSSIMPQKKNPDMAELIRGKVGRTTGHLMSMLMTLKGLPLAYNKDMQEDKEGLFDAVHTIKGSLRIFEGMIQTMTINKERLNQTVKEDFSNATELADYLVTKNIPFRTAHEIVGKIVLECIQQGHYLLDVPLATYQQHHSSIDADIYDYLQPENCLKRRQSYGSTGQSSVKQQLDVAKQLLSQ</sequence>
<accession>A5IRD8</accession>
<keyword id="KW-0028">Amino-acid biosynthesis</keyword>
<keyword id="KW-0055">Arginine biosynthesis</keyword>
<keyword id="KW-0963">Cytoplasm</keyword>
<keyword id="KW-0456">Lyase</keyword>
<evidence type="ECO:0000255" key="1">
    <source>
        <dbReference type="HAMAP-Rule" id="MF_00006"/>
    </source>
</evidence>
<gene>
    <name evidence="1" type="primary">argH</name>
    <name type="ordered locus">SaurJH9_0960</name>
</gene>